<dbReference type="EMBL" id="U34795">
    <property type="protein sequence ID" value="AAC43708.1"/>
    <property type="molecule type" value="Genomic_DNA"/>
</dbReference>
<dbReference type="EMBL" id="U00089">
    <property type="protein sequence ID" value="AAB96306.1"/>
    <property type="molecule type" value="Genomic_DNA"/>
</dbReference>
<dbReference type="PIR" id="S62803">
    <property type="entry name" value="S62803"/>
</dbReference>
<dbReference type="RefSeq" id="NP_109861.1">
    <property type="nucleotide sequence ID" value="NC_000912.1"/>
</dbReference>
<dbReference type="RefSeq" id="WP_010874530.1">
    <property type="nucleotide sequence ID" value="NZ_OU342337.1"/>
</dbReference>
<dbReference type="PDB" id="7OOD">
    <property type="method" value="EM"/>
    <property type="resolution" value="3.40 A"/>
    <property type="chains" value="w=1-111"/>
</dbReference>
<dbReference type="PDB" id="7P6Z">
    <property type="method" value="EM"/>
    <property type="resolution" value="3.50 A"/>
    <property type="chains" value="w=1-111"/>
</dbReference>
<dbReference type="PDB" id="7PAH">
    <property type="method" value="EM"/>
    <property type="resolution" value="9.50 A"/>
    <property type="chains" value="w=1-111"/>
</dbReference>
<dbReference type="PDB" id="7PAI">
    <property type="method" value="EM"/>
    <property type="resolution" value="6.70 A"/>
    <property type="chains" value="w=1-111"/>
</dbReference>
<dbReference type="PDB" id="7PAJ">
    <property type="method" value="EM"/>
    <property type="resolution" value="7.30 A"/>
    <property type="chains" value="w=1-111"/>
</dbReference>
<dbReference type="PDB" id="7PAK">
    <property type="method" value="EM"/>
    <property type="resolution" value="5.30 A"/>
    <property type="chains" value="w=1-111"/>
</dbReference>
<dbReference type="PDB" id="7PAL">
    <property type="method" value="EM"/>
    <property type="resolution" value="4.70 A"/>
    <property type="chains" value="w=1-111"/>
</dbReference>
<dbReference type="PDB" id="7PAM">
    <property type="method" value="EM"/>
    <property type="resolution" value="6.80 A"/>
    <property type="chains" value="w=1-111"/>
</dbReference>
<dbReference type="PDB" id="7PAN">
    <property type="method" value="EM"/>
    <property type="resolution" value="9.70 A"/>
    <property type="chains" value="w=1-111"/>
</dbReference>
<dbReference type="PDB" id="7PAO">
    <property type="method" value="EM"/>
    <property type="resolution" value="7.00 A"/>
    <property type="chains" value="w=1-111"/>
</dbReference>
<dbReference type="PDB" id="7PAQ">
    <property type="method" value="EM"/>
    <property type="resolution" value="8.90 A"/>
    <property type="chains" value="w=1-111"/>
</dbReference>
<dbReference type="PDB" id="7PAR">
    <property type="method" value="EM"/>
    <property type="resolution" value="8.20 A"/>
    <property type="chains" value="w=1-111"/>
</dbReference>
<dbReference type="PDB" id="7PAS">
    <property type="method" value="EM"/>
    <property type="resolution" value="16.00 A"/>
    <property type="chains" value="w=1-111"/>
</dbReference>
<dbReference type="PDB" id="7PAT">
    <property type="method" value="EM"/>
    <property type="resolution" value="9.20 A"/>
    <property type="chains" value="w=1-111"/>
</dbReference>
<dbReference type="PDB" id="7PAU">
    <property type="method" value="EM"/>
    <property type="resolution" value="8.30 A"/>
    <property type="chains" value="w=1-111"/>
</dbReference>
<dbReference type="PDB" id="7PH9">
    <property type="method" value="EM"/>
    <property type="resolution" value="8.70 A"/>
    <property type="chains" value="w=1-111"/>
</dbReference>
<dbReference type="PDB" id="7PHA">
    <property type="method" value="EM"/>
    <property type="resolution" value="8.50 A"/>
    <property type="chains" value="w=1-111"/>
</dbReference>
<dbReference type="PDB" id="7PHB">
    <property type="method" value="EM"/>
    <property type="resolution" value="4.90 A"/>
    <property type="chains" value="w=1-111"/>
</dbReference>
<dbReference type="PDB" id="7PHC">
    <property type="method" value="EM"/>
    <property type="resolution" value="9.90 A"/>
    <property type="chains" value="w=1-111"/>
</dbReference>
<dbReference type="PDB" id="7PI8">
    <property type="method" value="EM"/>
    <property type="resolution" value="8.90 A"/>
    <property type="chains" value="w=1-111"/>
</dbReference>
<dbReference type="PDB" id="7PI9">
    <property type="method" value="EM"/>
    <property type="resolution" value="6.30 A"/>
    <property type="chains" value="w=1-111"/>
</dbReference>
<dbReference type="PDB" id="7PIA">
    <property type="method" value="EM"/>
    <property type="resolution" value="13.60 A"/>
    <property type="chains" value="w=1-111"/>
</dbReference>
<dbReference type="PDB" id="7PIB">
    <property type="method" value="EM"/>
    <property type="resolution" value="4.70 A"/>
    <property type="chains" value="w=1-111"/>
</dbReference>
<dbReference type="PDB" id="7PIC">
    <property type="method" value="EM"/>
    <property type="resolution" value="9.10 A"/>
    <property type="chains" value="w=1-111"/>
</dbReference>
<dbReference type="PDB" id="7PIO">
    <property type="method" value="EM"/>
    <property type="resolution" value="9.50 A"/>
    <property type="chains" value="w=1-111"/>
</dbReference>
<dbReference type="PDB" id="7PIP">
    <property type="method" value="EM"/>
    <property type="resolution" value="9.30 A"/>
    <property type="chains" value="w=1-111"/>
</dbReference>
<dbReference type="PDB" id="7PIQ">
    <property type="method" value="EM"/>
    <property type="resolution" value="9.70 A"/>
    <property type="chains" value="w=1-111"/>
</dbReference>
<dbReference type="PDB" id="7PIR">
    <property type="method" value="EM"/>
    <property type="resolution" value="12.10 A"/>
    <property type="chains" value="w=1-111"/>
</dbReference>
<dbReference type="PDB" id="7PIS">
    <property type="method" value="EM"/>
    <property type="resolution" value="15.00 A"/>
    <property type="chains" value="w=1-111"/>
</dbReference>
<dbReference type="PDB" id="7PIT">
    <property type="method" value="EM"/>
    <property type="resolution" value="5.70 A"/>
    <property type="chains" value="w=1-111"/>
</dbReference>
<dbReference type="PDB" id="8P7X">
    <property type="method" value="EM"/>
    <property type="resolution" value="3.03 A"/>
    <property type="chains" value="w=1-111"/>
</dbReference>
<dbReference type="PDB" id="8P7Y">
    <property type="method" value="EM"/>
    <property type="resolution" value="3.70 A"/>
    <property type="chains" value="w=1-111"/>
</dbReference>
<dbReference type="PDB" id="8P8B">
    <property type="method" value="EM"/>
    <property type="resolution" value="2.90 A"/>
    <property type="chains" value="w=1-111"/>
</dbReference>
<dbReference type="PDB" id="8P8V">
    <property type="method" value="EM"/>
    <property type="resolution" value="8.70 A"/>
    <property type="chains" value="w=1-111"/>
</dbReference>
<dbReference type="PDB" id="8P8W">
    <property type="method" value="EM"/>
    <property type="resolution" value="8.70 A"/>
    <property type="chains" value="w=1-111"/>
</dbReference>
<dbReference type="PDBsum" id="7OOD"/>
<dbReference type="PDBsum" id="7P6Z"/>
<dbReference type="PDBsum" id="7PAH"/>
<dbReference type="PDBsum" id="7PAI"/>
<dbReference type="PDBsum" id="7PAJ"/>
<dbReference type="PDBsum" id="7PAK"/>
<dbReference type="PDBsum" id="7PAL"/>
<dbReference type="PDBsum" id="7PAM"/>
<dbReference type="PDBsum" id="7PAN"/>
<dbReference type="PDBsum" id="7PAO"/>
<dbReference type="PDBsum" id="7PAQ"/>
<dbReference type="PDBsum" id="7PAR"/>
<dbReference type="PDBsum" id="7PAS"/>
<dbReference type="PDBsum" id="7PAT"/>
<dbReference type="PDBsum" id="7PAU"/>
<dbReference type="PDBsum" id="7PH9"/>
<dbReference type="PDBsum" id="7PHA"/>
<dbReference type="PDBsum" id="7PHB"/>
<dbReference type="PDBsum" id="7PHC"/>
<dbReference type="PDBsum" id="7PI8"/>
<dbReference type="PDBsum" id="7PI9"/>
<dbReference type="PDBsum" id="7PIA"/>
<dbReference type="PDBsum" id="7PIB"/>
<dbReference type="PDBsum" id="7PIC"/>
<dbReference type="PDBsum" id="7PIO"/>
<dbReference type="PDBsum" id="7PIP"/>
<dbReference type="PDBsum" id="7PIQ"/>
<dbReference type="PDBsum" id="7PIR"/>
<dbReference type="PDBsum" id="7PIS"/>
<dbReference type="PDBsum" id="7PIT"/>
<dbReference type="PDBsum" id="8P7X"/>
<dbReference type="PDBsum" id="8P7Y"/>
<dbReference type="PDBsum" id="8P8B"/>
<dbReference type="PDBsum" id="8P8V"/>
<dbReference type="PDBsum" id="8P8W"/>
<dbReference type="EMDB" id="EMD-13234"/>
<dbReference type="EMDB" id="EMD-13272"/>
<dbReference type="EMDB" id="EMD-13273"/>
<dbReference type="EMDB" id="EMD-13274"/>
<dbReference type="EMDB" id="EMD-13275"/>
<dbReference type="EMDB" id="EMD-13276"/>
<dbReference type="EMDB" id="EMD-13277"/>
<dbReference type="EMDB" id="EMD-13278"/>
<dbReference type="EMDB" id="EMD-13279"/>
<dbReference type="EMDB" id="EMD-13280"/>
<dbReference type="EMDB" id="EMD-13281"/>
<dbReference type="EMDB" id="EMD-13282"/>
<dbReference type="EMDB" id="EMD-13285"/>
<dbReference type="EMDB" id="EMD-13286"/>
<dbReference type="EMDB" id="EMD-13410"/>
<dbReference type="EMDB" id="EMD-13411"/>
<dbReference type="EMDB" id="EMD-13412"/>
<dbReference type="EMDB" id="EMD-13413"/>
<dbReference type="EMDB" id="EMD-13432"/>
<dbReference type="EMDB" id="EMD-13433"/>
<dbReference type="EMDB" id="EMD-13434"/>
<dbReference type="EMDB" id="EMD-13435"/>
<dbReference type="EMDB" id="EMD-13436"/>
<dbReference type="EMDB" id="EMD-13445"/>
<dbReference type="EMDB" id="EMD-13446"/>
<dbReference type="EMDB" id="EMD-13447"/>
<dbReference type="EMDB" id="EMD-13448"/>
<dbReference type="EMDB" id="EMD-13449"/>
<dbReference type="EMDB" id="EMD-13450"/>
<dbReference type="SMR" id="Q50310"/>
<dbReference type="IntAct" id="Q50310">
    <property type="interactions" value="1"/>
</dbReference>
<dbReference type="STRING" id="272634.MPN_173"/>
<dbReference type="EnsemblBacteria" id="AAB96306">
    <property type="protein sequence ID" value="AAB96306"/>
    <property type="gene ID" value="MPN_173"/>
</dbReference>
<dbReference type="GeneID" id="66609179"/>
<dbReference type="KEGG" id="mpn:MPN_173"/>
<dbReference type="PATRIC" id="fig|272634.6.peg.191"/>
<dbReference type="HOGENOM" id="CLU_2155578_0_0_14"/>
<dbReference type="OrthoDB" id="401368at2"/>
<dbReference type="BioCyc" id="MPNE272634:G1GJ3-283-MONOMER"/>
<dbReference type="Proteomes" id="UP000000808">
    <property type="component" value="Chromosome"/>
</dbReference>
<dbReference type="GO" id="GO:0022625">
    <property type="term" value="C:cytosolic large ribosomal subunit"/>
    <property type="evidence" value="ECO:0007669"/>
    <property type="project" value="TreeGrafter"/>
</dbReference>
<dbReference type="GO" id="GO:0003735">
    <property type="term" value="F:structural constituent of ribosome"/>
    <property type="evidence" value="ECO:0007669"/>
    <property type="project" value="InterPro"/>
</dbReference>
<dbReference type="GO" id="GO:0006412">
    <property type="term" value="P:translation"/>
    <property type="evidence" value="ECO:0007669"/>
    <property type="project" value="UniProtKB-UniRule"/>
</dbReference>
<dbReference type="CDD" id="cd00427">
    <property type="entry name" value="Ribosomal_L29_HIP"/>
    <property type="match status" value="1"/>
</dbReference>
<dbReference type="Gene3D" id="1.10.287.310">
    <property type="match status" value="1"/>
</dbReference>
<dbReference type="HAMAP" id="MF_00374">
    <property type="entry name" value="Ribosomal_uL29"/>
    <property type="match status" value="1"/>
</dbReference>
<dbReference type="InterPro" id="IPR050063">
    <property type="entry name" value="Ribosomal_protein_uL29"/>
</dbReference>
<dbReference type="InterPro" id="IPR001854">
    <property type="entry name" value="Ribosomal_uL29"/>
</dbReference>
<dbReference type="InterPro" id="IPR018254">
    <property type="entry name" value="Ribosomal_uL29_CS"/>
</dbReference>
<dbReference type="InterPro" id="IPR036049">
    <property type="entry name" value="Ribosomal_uL29_sf"/>
</dbReference>
<dbReference type="NCBIfam" id="TIGR00012">
    <property type="entry name" value="L29"/>
    <property type="match status" value="1"/>
</dbReference>
<dbReference type="PANTHER" id="PTHR10916">
    <property type="entry name" value="60S RIBOSOMAL PROTEIN L35/50S RIBOSOMAL PROTEIN L29"/>
    <property type="match status" value="1"/>
</dbReference>
<dbReference type="PANTHER" id="PTHR10916:SF0">
    <property type="entry name" value="LARGE RIBOSOMAL SUBUNIT PROTEIN UL29C"/>
    <property type="match status" value="1"/>
</dbReference>
<dbReference type="Pfam" id="PF00831">
    <property type="entry name" value="Ribosomal_L29"/>
    <property type="match status" value="1"/>
</dbReference>
<dbReference type="SUPFAM" id="SSF46561">
    <property type="entry name" value="Ribosomal protein L29 (L29p)"/>
    <property type="match status" value="1"/>
</dbReference>
<dbReference type="PROSITE" id="PS00579">
    <property type="entry name" value="RIBOSOMAL_L29"/>
    <property type="match status" value="1"/>
</dbReference>
<sequence>MTVAKELRQKSSEELVKLVIKLKGELLEYRFKLAHGELDKPHLINQTRRLLATILTILTERKLNWQEEQAKYKLLTKKTNEAAVNAWKQHLEANKAKLLKSRAKREDASKK</sequence>
<reference key="1">
    <citation type="journal article" date="1996" name="Nucleic Acids Res.">
        <title>Sequence analysis of 56 kb from the genome of the bacterium Mycoplasma pneumoniae comprising the dnaA region, the atp operon and a cluster of ribosomal protein genes.</title>
        <authorList>
            <person name="Hilbert H."/>
            <person name="Himmelreich R."/>
            <person name="Plagens H."/>
            <person name="Herrmann R."/>
        </authorList>
    </citation>
    <scope>NUCLEOTIDE SEQUENCE [GENOMIC DNA]</scope>
    <source>
        <strain>ATCC 29342 / M129 / Subtype 1</strain>
    </source>
</reference>
<reference key="2">
    <citation type="journal article" date="1996" name="Nucleic Acids Res.">
        <title>Complete sequence analysis of the genome of the bacterium Mycoplasma pneumoniae.</title>
        <authorList>
            <person name="Himmelreich R."/>
            <person name="Hilbert H."/>
            <person name="Plagens H."/>
            <person name="Pirkl E."/>
            <person name="Li B.-C."/>
            <person name="Herrmann R."/>
        </authorList>
    </citation>
    <scope>NUCLEOTIDE SEQUENCE [LARGE SCALE GENOMIC DNA]</scope>
    <source>
        <strain>ATCC 29342 / M129 / Subtype 1</strain>
    </source>
</reference>
<gene>
    <name evidence="1" type="primary">rpmC</name>
    <name type="ordered locus">MPN_173</name>
    <name type="ORF">MP658</name>
</gene>
<name>RL29_MYCPN</name>
<evidence type="ECO:0000255" key="1">
    <source>
        <dbReference type="HAMAP-Rule" id="MF_00374"/>
    </source>
</evidence>
<evidence type="ECO:0007829" key="2">
    <source>
        <dbReference type="PDB" id="8P8B"/>
    </source>
</evidence>
<protein>
    <recommendedName>
        <fullName evidence="1">Large ribosomal subunit protein uL29</fullName>
    </recommendedName>
    <alternativeName>
        <fullName>50S ribosomal protein L29</fullName>
    </alternativeName>
</protein>
<proteinExistence type="evidence at protein level"/>
<feature type="chain" id="PRO_0000130422" description="Large ribosomal subunit protein uL29">
    <location>
        <begin position="1"/>
        <end position="111"/>
    </location>
</feature>
<feature type="region of interest" description="Large ribosomal subunit protein uL29" evidence="1">
    <location>
        <begin position="1"/>
        <end position="85"/>
    </location>
</feature>
<feature type="region of interest" description="Unknown">
    <location>
        <begin position="86"/>
        <end position="111"/>
    </location>
</feature>
<feature type="helix" evidence="2">
    <location>
        <begin position="3"/>
        <end position="9"/>
    </location>
</feature>
<feature type="helix" evidence="2">
    <location>
        <begin position="12"/>
        <end position="34"/>
    </location>
</feature>
<feature type="helix" evidence="2">
    <location>
        <begin position="43"/>
        <end position="60"/>
    </location>
</feature>
<feature type="helix" evidence="2">
    <location>
        <begin position="66"/>
        <end position="71"/>
    </location>
</feature>
<feature type="helix" evidence="2">
    <location>
        <begin position="81"/>
        <end position="110"/>
    </location>
</feature>
<accession>Q50310</accession>
<organism>
    <name type="scientific">Mycoplasma pneumoniae (strain ATCC 29342 / M129 / Subtype 1)</name>
    <name type="common">Mycoplasmoides pneumoniae</name>
    <dbReference type="NCBI Taxonomy" id="272634"/>
    <lineage>
        <taxon>Bacteria</taxon>
        <taxon>Bacillati</taxon>
        <taxon>Mycoplasmatota</taxon>
        <taxon>Mycoplasmoidales</taxon>
        <taxon>Mycoplasmoidaceae</taxon>
        <taxon>Mycoplasmoides</taxon>
    </lineage>
</organism>
<keyword id="KW-0002">3D-structure</keyword>
<keyword id="KW-1185">Reference proteome</keyword>
<keyword id="KW-0687">Ribonucleoprotein</keyword>
<keyword id="KW-0689">Ribosomal protein</keyword>
<comment type="similarity">
    <text evidence="1">Belongs to the universal ribosomal protein uL29 family.</text>
</comment>